<gene>
    <name type="primary">rplV</name>
    <name type="synonym">rpl22</name>
</gene>
<accession>P48286</accession>
<reference key="1">
    <citation type="journal article" date="1995" name="FEBS Lett.">
        <title>Ribosomal protein L22 from Thermus thermophilus: sequencing, overexpression and crystallisation.</title>
        <authorList>
            <person name="Davydova N."/>
            <person name="Gryaznova O.I."/>
            <person name="Mashchenko O.V."/>
            <person name="Vysotskaya V.S."/>
            <person name="Jonsson B.-H."/>
            <person name="Al-Karadaghi S."/>
            <person name="Liljas A."/>
            <person name="Garber M.B."/>
        </authorList>
    </citation>
    <scope>NUCLEOTIDE SEQUENCE [GENOMIC DNA]</scope>
    <source>
        <strain>VK1</strain>
    </source>
</reference>
<reference key="2">
    <citation type="journal article" date="1998" name="Structure">
        <title>The crystal structure of ribosomal protein L22 from Thermus thermophilus: insights into the mechanism of erythromycin resistance.</title>
        <authorList>
            <person name="Unge J."/>
            <person name="Aaberg A."/>
            <person name="Al-Karadaghi S."/>
            <person name="Nikulin A."/>
            <person name="Nikonov S."/>
            <person name="Davydova N."/>
            <person name="Nevskaya N."/>
            <person name="Garber M.B."/>
            <person name="Liljas A."/>
        </authorList>
    </citation>
    <scope>X-RAY CRYSTALLOGRAPHY (1.9 ANGSTROMS)</scope>
    <source>
        <strain>VK1</strain>
    </source>
</reference>
<reference key="3">
    <citation type="journal article" date="2002" name="J. Mol. Biol.">
        <title>L22 ribosomal protein and effect of its mutation on ribosome resistance to erythromycin.</title>
        <authorList>
            <person name="Davydova N."/>
            <person name="Streltsov V."/>
            <person name="Wilce M."/>
            <person name="Liljas A."/>
            <person name="Garber M.B."/>
        </authorList>
    </citation>
    <scope>X-RAY CRYSTALLOGRAPHY (1.8 ANGSTROMS) OF MUTANT 82-LEU-ARG-84 DEL</scope>
    <source>
        <strain>VK1</strain>
    </source>
</reference>
<feature type="chain" id="PRO_0000125250" description="Large ribosomal subunit protein uL22">
    <location>
        <begin position="1"/>
        <end position="113"/>
    </location>
</feature>
<feature type="mutagenesis site" description="Alters the orientation of the tip of the beta-hairpin, bending it into the polypeptide exit tunnel.">
    <location>
        <begin position="82"/>
        <end position="84"/>
    </location>
</feature>
<feature type="strand" evidence="3">
    <location>
        <begin position="3"/>
        <end position="12"/>
    </location>
</feature>
<feature type="helix" evidence="3">
    <location>
        <begin position="14"/>
        <end position="24"/>
    </location>
</feature>
<feature type="helix" evidence="3">
    <location>
        <begin position="29"/>
        <end position="38"/>
    </location>
</feature>
<feature type="helix" evidence="3">
    <location>
        <begin position="44"/>
        <end position="60"/>
    </location>
</feature>
<feature type="helix" evidence="3">
    <location>
        <begin position="66"/>
        <end position="68"/>
    </location>
</feature>
<feature type="strand" evidence="3">
    <location>
        <begin position="69"/>
        <end position="81"/>
    </location>
</feature>
<feature type="strand" evidence="3">
    <location>
        <begin position="89"/>
        <end position="91"/>
    </location>
</feature>
<feature type="strand" evidence="3">
    <location>
        <begin position="98"/>
        <end position="111"/>
    </location>
</feature>
<protein>
    <recommendedName>
        <fullName evidence="2">Large ribosomal subunit protein uL22</fullName>
    </recommendedName>
    <alternativeName>
        <fullName>50S ribosomal protein L22</fullName>
    </alternativeName>
</protein>
<comment type="function">
    <text evidence="1">This protein binds specifically to 23S rRNA; its binding is stimulated by other ribosomal proteins, e.g. L4, L17, and L20. It is important during the early stages of 50S assembly. It makes multiple contacts with different domains of the 23S rRNA in the assembled 50S subunit and ribosome (By similarity).</text>
</comment>
<comment type="function">
    <text evidence="1">The globular domain of the protein is one of the proteins that surrounds the polypeptide exit tunnel on the outside of the subunit, while an extended beta-hairpin is found that penetrates into the center of the 70S ribosome. This extension seems to form part of the wall of the exit tunnel (By similarity). Deleting residues 82 to 84 (the equivalent deletion in E.coli renders cells resistant to erythromycin) would probably cause the tip of the hairpin to penetrate into the tunnel.</text>
</comment>
<comment type="subunit">
    <text>Part of the 50S ribosomal subunit.</text>
</comment>
<comment type="similarity">
    <text evidence="2">Belongs to the universal ribosomal protein uL22 family.</text>
</comment>
<name>RL22_THETH</name>
<sequence length="113" mass="12780">MEAKAIARYVRISPRKVRLVVDLIRGKSLEEARNILRYTNKRGAYFVAKVLESAAANAVNNHDMLEDRLYVKAAYVDEGPALKRVLPRARGRADIIKKRTSHITVILGEKHGK</sequence>
<proteinExistence type="evidence at protein level"/>
<organism>
    <name type="scientific">Thermus thermophilus</name>
    <dbReference type="NCBI Taxonomy" id="274"/>
    <lineage>
        <taxon>Bacteria</taxon>
        <taxon>Thermotogati</taxon>
        <taxon>Deinococcota</taxon>
        <taxon>Deinococci</taxon>
        <taxon>Thermales</taxon>
        <taxon>Thermaceae</taxon>
        <taxon>Thermus</taxon>
    </lineage>
</organism>
<evidence type="ECO:0000250" key="1"/>
<evidence type="ECO:0000305" key="2"/>
<evidence type="ECO:0007829" key="3">
    <source>
        <dbReference type="PDB" id="1I4J"/>
    </source>
</evidence>
<keyword id="KW-0002">3D-structure</keyword>
<keyword id="KW-0687">Ribonucleoprotein</keyword>
<keyword id="KW-0689">Ribosomal protein</keyword>
<keyword id="KW-0694">RNA-binding</keyword>
<keyword id="KW-0699">rRNA-binding</keyword>
<dbReference type="EMBL" id="X84708">
    <property type="protein sequence ID" value="CAA59196.1"/>
    <property type="molecule type" value="Genomic_DNA"/>
</dbReference>
<dbReference type="RefSeq" id="WP_011173710.1">
    <property type="nucleotide sequence ID" value="NZ_LR027517.1"/>
</dbReference>
<dbReference type="PDB" id="1BXE">
    <property type="method" value="X-ray"/>
    <property type="resolution" value="1.90 A"/>
    <property type="chains" value="A=1-113"/>
</dbReference>
<dbReference type="PDB" id="1I4J">
    <property type="method" value="X-ray"/>
    <property type="resolution" value="1.80 A"/>
    <property type="chains" value="A/B=1-113"/>
</dbReference>
<dbReference type="PDBsum" id="1BXE"/>
<dbReference type="PDBsum" id="1I4J"/>
<dbReference type="SMR" id="P48286"/>
<dbReference type="GeneID" id="3169835"/>
<dbReference type="OMA" id="KRIQPRA"/>
<dbReference type="EvolutionaryTrace" id="P48286"/>
<dbReference type="GO" id="GO:0022625">
    <property type="term" value="C:cytosolic large ribosomal subunit"/>
    <property type="evidence" value="ECO:0007669"/>
    <property type="project" value="TreeGrafter"/>
</dbReference>
<dbReference type="GO" id="GO:0019843">
    <property type="term" value="F:rRNA binding"/>
    <property type="evidence" value="ECO:0007669"/>
    <property type="project" value="UniProtKB-UniRule"/>
</dbReference>
<dbReference type="GO" id="GO:0003735">
    <property type="term" value="F:structural constituent of ribosome"/>
    <property type="evidence" value="ECO:0007669"/>
    <property type="project" value="InterPro"/>
</dbReference>
<dbReference type="GO" id="GO:0006412">
    <property type="term" value="P:translation"/>
    <property type="evidence" value="ECO:0007669"/>
    <property type="project" value="UniProtKB-UniRule"/>
</dbReference>
<dbReference type="CDD" id="cd00336">
    <property type="entry name" value="Ribosomal_L22"/>
    <property type="match status" value="1"/>
</dbReference>
<dbReference type="FunFam" id="3.90.470.10:FF:000011">
    <property type="entry name" value="50S ribosomal protein L22"/>
    <property type="match status" value="1"/>
</dbReference>
<dbReference type="Gene3D" id="3.90.470.10">
    <property type="entry name" value="Ribosomal protein L22/L17"/>
    <property type="match status" value="1"/>
</dbReference>
<dbReference type="HAMAP" id="MF_01331_B">
    <property type="entry name" value="Ribosomal_uL22_B"/>
    <property type="match status" value="1"/>
</dbReference>
<dbReference type="InterPro" id="IPR001063">
    <property type="entry name" value="Ribosomal_uL22"/>
</dbReference>
<dbReference type="InterPro" id="IPR005727">
    <property type="entry name" value="Ribosomal_uL22_bac/chlpt-type"/>
</dbReference>
<dbReference type="InterPro" id="IPR047867">
    <property type="entry name" value="Ribosomal_uL22_bac/org-type"/>
</dbReference>
<dbReference type="InterPro" id="IPR018260">
    <property type="entry name" value="Ribosomal_uL22_CS"/>
</dbReference>
<dbReference type="InterPro" id="IPR036394">
    <property type="entry name" value="Ribosomal_uL22_sf"/>
</dbReference>
<dbReference type="NCBIfam" id="TIGR01044">
    <property type="entry name" value="rplV_bact"/>
    <property type="match status" value="1"/>
</dbReference>
<dbReference type="PANTHER" id="PTHR13501">
    <property type="entry name" value="CHLOROPLAST 50S RIBOSOMAL PROTEIN L22-RELATED"/>
    <property type="match status" value="1"/>
</dbReference>
<dbReference type="PANTHER" id="PTHR13501:SF8">
    <property type="entry name" value="LARGE RIBOSOMAL SUBUNIT PROTEIN UL22M"/>
    <property type="match status" value="1"/>
</dbReference>
<dbReference type="Pfam" id="PF00237">
    <property type="entry name" value="Ribosomal_L22"/>
    <property type="match status" value="1"/>
</dbReference>
<dbReference type="SUPFAM" id="SSF54843">
    <property type="entry name" value="Ribosomal protein L22"/>
    <property type="match status" value="1"/>
</dbReference>
<dbReference type="PROSITE" id="PS00464">
    <property type="entry name" value="RIBOSOMAL_L22"/>
    <property type="match status" value="1"/>
</dbReference>